<feature type="chain" id="PRO_0000161312" description="Fumarate hydratase class II">
    <location>
        <begin position="1"/>
        <end position="461"/>
    </location>
</feature>
<feature type="active site" description="Proton donor/acceptor" evidence="1">
    <location>
        <position position="186"/>
    </location>
</feature>
<feature type="active site" evidence="1">
    <location>
        <position position="316"/>
    </location>
</feature>
<feature type="binding site" evidence="1">
    <location>
        <begin position="97"/>
        <end position="99"/>
    </location>
    <ligand>
        <name>substrate</name>
    </ligand>
</feature>
<feature type="binding site" description="in site B" evidence="1">
    <location>
        <begin position="127"/>
        <end position="130"/>
    </location>
    <ligand>
        <name>substrate</name>
    </ligand>
</feature>
<feature type="binding site" evidence="1">
    <location>
        <begin position="137"/>
        <end position="139"/>
    </location>
    <ligand>
        <name>substrate</name>
    </ligand>
</feature>
<feature type="binding site" evidence="1">
    <location>
        <position position="185"/>
    </location>
    <ligand>
        <name>substrate</name>
    </ligand>
</feature>
<feature type="binding site" evidence="1">
    <location>
        <position position="317"/>
    </location>
    <ligand>
        <name>substrate</name>
    </ligand>
</feature>
<feature type="binding site" evidence="1">
    <location>
        <begin position="322"/>
        <end position="324"/>
    </location>
    <ligand>
        <name>substrate</name>
    </ligand>
</feature>
<feature type="site" description="Important for catalytic activity" evidence="1">
    <location>
        <position position="329"/>
    </location>
</feature>
<organism>
    <name type="scientific">Staphylococcus aureus (strain Mu50 / ATCC 700699)</name>
    <dbReference type="NCBI Taxonomy" id="158878"/>
    <lineage>
        <taxon>Bacteria</taxon>
        <taxon>Bacillati</taxon>
        <taxon>Bacillota</taxon>
        <taxon>Bacilli</taxon>
        <taxon>Bacillales</taxon>
        <taxon>Staphylococcaceae</taxon>
        <taxon>Staphylococcus</taxon>
    </lineage>
</organism>
<sequence length="461" mass="51161">MSVRIEHDTFGEIEVPADKYWGAQTERSKRNFPVGKERMPIEVVYGFAQLKRAAALANFDLGKLSEAKKDAIVYACDQILSGELDEHFPLVVWQTGSGTQSNMNVNEVVSYVANMYLKDHQIDESIHPNDDVNESQSSNDTFPTAMHVALYQEVETKLEPALKLLRNTLKEKEDKFESIIKIGRTHLQDATPIKLGQEISGWRYMLDRCEIMLSESKKHILNLAIGGTAVGTGINAHPEFGDKVAHYISENTGYPFVSSENKFHALTAHDEVVQLHGTLKALAGDLMKIANDVRWLASGPRAGLAEISIPENEPGSSIMPGKVNPTQCEMLTMVAVQVMGNDTVVGFASSQGNFELNVYKPVIMHNTLQSIYLLADGMETFNNNCAVGIEPIEENIDNYLNQSLMLVTALNPHIGYEKAAQIAKKAHKEGLTLKESAIQTGYVTEEQFEAWIKPEDMVDPH</sequence>
<accession>P64172</accession>
<accession>Q99T27</accession>
<reference key="1">
    <citation type="journal article" date="2001" name="Lancet">
        <title>Whole genome sequencing of meticillin-resistant Staphylococcus aureus.</title>
        <authorList>
            <person name="Kuroda M."/>
            <person name="Ohta T."/>
            <person name="Uchiyama I."/>
            <person name="Baba T."/>
            <person name="Yuzawa H."/>
            <person name="Kobayashi I."/>
            <person name="Cui L."/>
            <person name="Oguchi A."/>
            <person name="Aoki K."/>
            <person name="Nagai Y."/>
            <person name="Lian J.-Q."/>
            <person name="Ito T."/>
            <person name="Kanamori M."/>
            <person name="Matsumaru H."/>
            <person name="Maruyama A."/>
            <person name="Murakami H."/>
            <person name="Hosoyama A."/>
            <person name="Mizutani-Ui Y."/>
            <person name="Takahashi N.K."/>
            <person name="Sawano T."/>
            <person name="Inoue R."/>
            <person name="Kaito C."/>
            <person name="Sekimizu K."/>
            <person name="Hirakawa H."/>
            <person name="Kuhara S."/>
            <person name="Goto S."/>
            <person name="Yabuzaki J."/>
            <person name="Kanehisa M."/>
            <person name="Yamashita A."/>
            <person name="Oshima K."/>
            <person name="Furuya K."/>
            <person name="Yoshino C."/>
            <person name="Shiba T."/>
            <person name="Hattori M."/>
            <person name="Ogasawara N."/>
            <person name="Hayashi H."/>
            <person name="Hiramatsu K."/>
        </authorList>
    </citation>
    <scope>NUCLEOTIDE SEQUENCE [LARGE SCALE GENOMIC DNA]</scope>
    <source>
        <strain>Mu50 / ATCC 700699</strain>
    </source>
</reference>
<proteinExistence type="inferred from homology"/>
<gene>
    <name evidence="1" type="primary">fumC</name>
    <name type="synonym">citG</name>
    <name type="ordered locus">SAV1851</name>
</gene>
<keyword id="KW-0963">Cytoplasm</keyword>
<keyword id="KW-0456">Lyase</keyword>
<keyword id="KW-0816">Tricarboxylic acid cycle</keyword>
<name>FUMC_STAAM</name>
<evidence type="ECO:0000255" key="1">
    <source>
        <dbReference type="HAMAP-Rule" id="MF_00743"/>
    </source>
</evidence>
<dbReference type="EC" id="4.2.1.2" evidence="1"/>
<dbReference type="EMBL" id="BA000017">
    <property type="protein sequence ID" value="BAB58013.1"/>
    <property type="molecule type" value="Genomic_DNA"/>
</dbReference>
<dbReference type="RefSeq" id="WP_000116228.1">
    <property type="nucleotide sequence ID" value="NC_002758.2"/>
</dbReference>
<dbReference type="SMR" id="P64172"/>
<dbReference type="KEGG" id="sav:SAV1851"/>
<dbReference type="HOGENOM" id="CLU_021594_4_1_9"/>
<dbReference type="PhylomeDB" id="P64172"/>
<dbReference type="UniPathway" id="UPA00223">
    <property type="reaction ID" value="UER01007"/>
</dbReference>
<dbReference type="Proteomes" id="UP000002481">
    <property type="component" value="Chromosome"/>
</dbReference>
<dbReference type="GO" id="GO:0005737">
    <property type="term" value="C:cytoplasm"/>
    <property type="evidence" value="ECO:0007669"/>
    <property type="project" value="UniProtKB-SubCell"/>
</dbReference>
<dbReference type="GO" id="GO:0004333">
    <property type="term" value="F:fumarate hydratase activity"/>
    <property type="evidence" value="ECO:0007669"/>
    <property type="project" value="UniProtKB-UniRule"/>
</dbReference>
<dbReference type="GO" id="GO:0006106">
    <property type="term" value="P:fumarate metabolic process"/>
    <property type="evidence" value="ECO:0007669"/>
    <property type="project" value="InterPro"/>
</dbReference>
<dbReference type="GO" id="GO:0006108">
    <property type="term" value="P:malate metabolic process"/>
    <property type="evidence" value="ECO:0007669"/>
    <property type="project" value="TreeGrafter"/>
</dbReference>
<dbReference type="GO" id="GO:0006099">
    <property type="term" value="P:tricarboxylic acid cycle"/>
    <property type="evidence" value="ECO:0007669"/>
    <property type="project" value="UniProtKB-UniRule"/>
</dbReference>
<dbReference type="CDD" id="cd01362">
    <property type="entry name" value="Fumarase_classII"/>
    <property type="match status" value="1"/>
</dbReference>
<dbReference type="FunFam" id="1.10.40.30:FF:000002">
    <property type="entry name" value="Fumarate hydratase class II"/>
    <property type="match status" value="1"/>
</dbReference>
<dbReference type="FunFam" id="1.10.275.10:FF:000001">
    <property type="entry name" value="Fumarate hydratase, mitochondrial"/>
    <property type="match status" value="1"/>
</dbReference>
<dbReference type="FunFam" id="1.20.200.10:FF:000001">
    <property type="entry name" value="Fumarate hydratase, mitochondrial"/>
    <property type="match status" value="1"/>
</dbReference>
<dbReference type="Gene3D" id="1.10.40.30">
    <property type="entry name" value="Fumarase/aspartase (C-terminal domain)"/>
    <property type="match status" value="1"/>
</dbReference>
<dbReference type="Gene3D" id="1.20.200.10">
    <property type="entry name" value="Fumarase/aspartase (Central domain)"/>
    <property type="match status" value="1"/>
</dbReference>
<dbReference type="Gene3D" id="1.10.275.10">
    <property type="entry name" value="Fumarase/aspartase (N-terminal domain)"/>
    <property type="match status" value="1"/>
</dbReference>
<dbReference type="HAMAP" id="MF_00743">
    <property type="entry name" value="FumaraseC"/>
    <property type="match status" value="1"/>
</dbReference>
<dbReference type="InterPro" id="IPR005677">
    <property type="entry name" value="Fum_hydII"/>
</dbReference>
<dbReference type="InterPro" id="IPR024083">
    <property type="entry name" value="Fumarase/histidase_N"/>
</dbReference>
<dbReference type="InterPro" id="IPR018951">
    <property type="entry name" value="Fumarase_C_C"/>
</dbReference>
<dbReference type="InterPro" id="IPR020557">
    <property type="entry name" value="Fumarate_lyase_CS"/>
</dbReference>
<dbReference type="InterPro" id="IPR000362">
    <property type="entry name" value="Fumarate_lyase_fam"/>
</dbReference>
<dbReference type="InterPro" id="IPR022761">
    <property type="entry name" value="Fumarate_lyase_N"/>
</dbReference>
<dbReference type="InterPro" id="IPR008948">
    <property type="entry name" value="L-Aspartase-like"/>
</dbReference>
<dbReference type="NCBIfam" id="TIGR00979">
    <property type="entry name" value="fumC_II"/>
    <property type="match status" value="1"/>
</dbReference>
<dbReference type="NCBIfam" id="NF008909">
    <property type="entry name" value="PRK12273.1"/>
    <property type="match status" value="1"/>
</dbReference>
<dbReference type="PANTHER" id="PTHR11444">
    <property type="entry name" value="ASPARTATEAMMONIA/ARGININOSUCCINATE/ADENYLOSUCCINATE LYASE"/>
    <property type="match status" value="1"/>
</dbReference>
<dbReference type="PANTHER" id="PTHR11444:SF1">
    <property type="entry name" value="FUMARATE HYDRATASE, MITOCHONDRIAL"/>
    <property type="match status" value="1"/>
</dbReference>
<dbReference type="Pfam" id="PF10415">
    <property type="entry name" value="FumaraseC_C"/>
    <property type="match status" value="1"/>
</dbReference>
<dbReference type="Pfam" id="PF00206">
    <property type="entry name" value="Lyase_1"/>
    <property type="match status" value="1"/>
</dbReference>
<dbReference type="PRINTS" id="PR00145">
    <property type="entry name" value="ARGSUCLYASE"/>
</dbReference>
<dbReference type="PRINTS" id="PR00149">
    <property type="entry name" value="FUMRATELYASE"/>
</dbReference>
<dbReference type="SUPFAM" id="SSF48557">
    <property type="entry name" value="L-aspartase-like"/>
    <property type="match status" value="1"/>
</dbReference>
<dbReference type="PROSITE" id="PS00163">
    <property type="entry name" value="FUMARATE_LYASES"/>
    <property type="match status" value="1"/>
</dbReference>
<protein>
    <recommendedName>
        <fullName evidence="1">Fumarate hydratase class II</fullName>
        <shortName evidence="1">Fumarase C</shortName>
        <ecNumber evidence="1">4.2.1.2</ecNumber>
    </recommendedName>
    <alternativeName>
        <fullName evidence="1">Aerobic fumarase</fullName>
    </alternativeName>
    <alternativeName>
        <fullName evidence="1">Iron-independent fumarase</fullName>
    </alternativeName>
</protein>
<comment type="function">
    <text evidence="1">Involved in the TCA cycle. Catalyzes the stereospecific interconversion of fumarate to L-malate.</text>
</comment>
<comment type="catalytic activity">
    <reaction evidence="1">
        <text>(S)-malate = fumarate + H2O</text>
        <dbReference type="Rhea" id="RHEA:12460"/>
        <dbReference type="ChEBI" id="CHEBI:15377"/>
        <dbReference type="ChEBI" id="CHEBI:15589"/>
        <dbReference type="ChEBI" id="CHEBI:29806"/>
        <dbReference type="EC" id="4.2.1.2"/>
    </reaction>
</comment>
<comment type="pathway">
    <text evidence="1">Carbohydrate metabolism; tricarboxylic acid cycle; (S)-malate from fumarate: step 1/1.</text>
</comment>
<comment type="subunit">
    <text evidence="1">Homotetramer.</text>
</comment>
<comment type="subcellular location">
    <subcellularLocation>
        <location evidence="1">Cytoplasm</location>
    </subcellularLocation>
</comment>
<comment type="miscellaneous">
    <text evidence="1">There are 2 substrate-binding sites: the catalytic A site, and the non-catalytic B site that may play a role in the transfer of substrate or product between the active site and the solvent. Alternatively, the B site may bind allosteric effectors.</text>
</comment>
<comment type="similarity">
    <text evidence="1">Belongs to the class-II fumarase/aspartase family. Fumarase subfamily.</text>
</comment>